<evidence type="ECO:0000255" key="1">
    <source>
        <dbReference type="HAMAP-Rule" id="MF_01684"/>
    </source>
</evidence>
<accession>Q7MNT0</accession>
<comment type="function">
    <text evidence="1">Catalyzes the irreversible cleavage of the glycosidic bond in both 5'-methylthioadenosine (MTA) and S-adenosylhomocysteine (SAH/AdoHcy) to adenine and the corresponding thioribose, 5'-methylthioribose and S-ribosylhomocysteine, respectively. Also cleaves 5'-deoxyadenosine, a toxic by-product of radical S-adenosylmethionine (SAM) enzymes, into 5-deoxyribose and adenine.</text>
</comment>
<comment type="catalytic activity">
    <reaction evidence="1">
        <text>S-adenosyl-L-homocysteine + H2O = S-(5-deoxy-D-ribos-5-yl)-L-homocysteine + adenine</text>
        <dbReference type="Rhea" id="RHEA:17805"/>
        <dbReference type="ChEBI" id="CHEBI:15377"/>
        <dbReference type="ChEBI" id="CHEBI:16708"/>
        <dbReference type="ChEBI" id="CHEBI:57856"/>
        <dbReference type="ChEBI" id="CHEBI:58195"/>
        <dbReference type="EC" id="3.2.2.9"/>
    </reaction>
</comment>
<comment type="catalytic activity">
    <reaction evidence="1">
        <text>S-methyl-5'-thioadenosine + H2O = 5-(methylsulfanyl)-D-ribose + adenine</text>
        <dbReference type="Rhea" id="RHEA:13617"/>
        <dbReference type="ChEBI" id="CHEBI:15377"/>
        <dbReference type="ChEBI" id="CHEBI:16708"/>
        <dbReference type="ChEBI" id="CHEBI:17509"/>
        <dbReference type="ChEBI" id="CHEBI:78440"/>
        <dbReference type="EC" id="3.2.2.9"/>
    </reaction>
</comment>
<comment type="catalytic activity">
    <reaction evidence="1">
        <text>5'-deoxyadenosine + H2O = 5-deoxy-D-ribose + adenine</text>
        <dbReference type="Rhea" id="RHEA:29859"/>
        <dbReference type="ChEBI" id="CHEBI:15377"/>
        <dbReference type="ChEBI" id="CHEBI:16708"/>
        <dbReference type="ChEBI" id="CHEBI:17319"/>
        <dbReference type="ChEBI" id="CHEBI:149540"/>
        <dbReference type="EC" id="3.2.2.9"/>
    </reaction>
    <physiologicalReaction direction="left-to-right" evidence="1">
        <dbReference type="Rhea" id="RHEA:29860"/>
    </physiologicalReaction>
</comment>
<comment type="pathway">
    <text evidence="1">Amino-acid biosynthesis; L-methionine biosynthesis via salvage pathway; S-methyl-5-thio-alpha-D-ribose 1-phosphate from S-methyl-5'-thioadenosine (hydrolase route): step 1/2.</text>
</comment>
<comment type="similarity">
    <text evidence="1">Belongs to the PNP/UDP phosphorylase family. MtnN subfamily.</text>
</comment>
<organism>
    <name type="scientific">Vibrio vulnificus (strain YJ016)</name>
    <dbReference type="NCBI Taxonomy" id="196600"/>
    <lineage>
        <taxon>Bacteria</taxon>
        <taxon>Pseudomonadati</taxon>
        <taxon>Pseudomonadota</taxon>
        <taxon>Gammaproteobacteria</taxon>
        <taxon>Vibrionales</taxon>
        <taxon>Vibrionaceae</taxon>
        <taxon>Vibrio</taxon>
    </lineage>
</organism>
<dbReference type="EC" id="3.2.2.9" evidence="1"/>
<dbReference type="EMBL" id="BA000037">
    <property type="protein sequence ID" value="BAC93399.1"/>
    <property type="molecule type" value="Genomic_DNA"/>
</dbReference>
<dbReference type="RefSeq" id="WP_011149517.1">
    <property type="nucleotide sequence ID" value="NC_005139.1"/>
</dbReference>
<dbReference type="SMR" id="Q7MNT0"/>
<dbReference type="STRING" id="672.VV93_v1c05750"/>
<dbReference type="GeneID" id="93894871"/>
<dbReference type="KEGG" id="vvy:VV0635"/>
<dbReference type="eggNOG" id="COG0775">
    <property type="taxonomic scope" value="Bacteria"/>
</dbReference>
<dbReference type="HOGENOM" id="CLU_031248_2_2_6"/>
<dbReference type="UniPathway" id="UPA00904">
    <property type="reaction ID" value="UER00871"/>
</dbReference>
<dbReference type="Proteomes" id="UP000002675">
    <property type="component" value="Chromosome I"/>
</dbReference>
<dbReference type="GO" id="GO:0005829">
    <property type="term" value="C:cytosol"/>
    <property type="evidence" value="ECO:0007669"/>
    <property type="project" value="TreeGrafter"/>
</dbReference>
<dbReference type="GO" id="GO:0008782">
    <property type="term" value="F:adenosylhomocysteine nucleosidase activity"/>
    <property type="evidence" value="ECO:0007669"/>
    <property type="project" value="UniProtKB-UniRule"/>
</dbReference>
<dbReference type="GO" id="GO:0008930">
    <property type="term" value="F:methylthioadenosine nucleosidase activity"/>
    <property type="evidence" value="ECO:0007669"/>
    <property type="project" value="UniProtKB-UniRule"/>
</dbReference>
<dbReference type="GO" id="GO:0019509">
    <property type="term" value="P:L-methionine salvage from methylthioadenosine"/>
    <property type="evidence" value="ECO:0007669"/>
    <property type="project" value="UniProtKB-UniRule"/>
</dbReference>
<dbReference type="GO" id="GO:0019284">
    <property type="term" value="P:L-methionine salvage from S-adenosylmethionine"/>
    <property type="evidence" value="ECO:0007669"/>
    <property type="project" value="TreeGrafter"/>
</dbReference>
<dbReference type="GO" id="GO:0009164">
    <property type="term" value="P:nucleoside catabolic process"/>
    <property type="evidence" value="ECO:0007669"/>
    <property type="project" value="InterPro"/>
</dbReference>
<dbReference type="CDD" id="cd09008">
    <property type="entry name" value="MTAN"/>
    <property type="match status" value="1"/>
</dbReference>
<dbReference type="FunFam" id="3.40.50.1580:FF:000001">
    <property type="entry name" value="MTA/SAH nucleosidase family protein"/>
    <property type="match status" value="1"/>
</dbReference>
<dbReference type="Gene3D" id="3.40.50.1580">
    <property type="entry name" value="Nucleoside phosphorylase domain"/>
    <property type="match status" value="1"/>
</dbReference>
<dbReference type="HAMAP" id="MF_01684">
    <property type="entry name" value="Salvage_MtnN"/>
    <property type="match status" value="1"/>
</dbReference>
<dbReference type="InterPro" id="IPR010049">
    <property type="entry name" value="MTA_SAH_Nsdase"/>
</dbReference>
<dbReference type="InterPro" id="IPR000845">
    <property type="entry name" value="Nucleoside_phosphorylase_d"/>
</dbReference>
<dbReference type="InterPro" id="IPR035994">
    <property type="entry name" value="Nucleoside_phosphorylase_sf"/>
</dbReference>
<dbReference type="NCBIfam" id="TIGR01704">
    <property type="entry name" value="MTA_SAH-Nsdase"/>
    <property type="match status" value="1"/>
</dbReference>
<dbReference type="NCBIfam" id="NF004079">
    <property type="entry name" value="PRK05584.1"/>
    <property type="match status" value="1"/>
</dbReference>
<dbReference type="PANTHER" id="PTHR46832">
    <property type="entry name" value="5'-METHYLTHIOADENOSINE/S-ADENOSYLHOMOCYSTEINE NUCLEOSIDASE"/>
    <property type="match status" value="1"/>
</dbReference>
<dbReference type="PANTHER" id="PTHR46832:SF1">
    <property type="entry name" value="5'-METHYLTHIOADENOSINE_S-ADENOSYLHOMOCYSTEINE NUCLEOSIDASE"/>
    <property type="match status" value="1"/>
</dbReference>
<dbReference type="Pfam" id="PF01048">
    <property type="entry name" value="PNP_UDP_1"/>
    <property type="match status" value="1"/>
</dbReference>
<dbReference type="SUPFAM" id="SSF53167">
    <property type="entry name" value="Purine and uridine phosphorylases"/>
    <property type="match status" value="1"/>
</dbReference>
<protein>
    <recommendedName>
        <fullName evidence="1">5'-methylthioadenosine/S-adenosylhomocysteine nucleosidase</fullName>
        <shortName evidence="1">MTA/SAH nucleosidase</shortName>
        <shortName evidence="1">MTAN</shortName>
        <ecNumber evidence="1">3.2.2.9</ecNumber>
    </recommendedName>
    <alternativeName>
        <fullName evidence="1">5'-deoxyadenosine nucleosidase</fullName>
        <shortName evidence="1">DOA nucleosidase</shortName>
        <shortName evidence="1">dAdo nucleosidase</shortName>
    </alternativeName>
    <alternativeName>
        <fullName evidence="1">5'-methylthioadenosine nucleosidase</fullName>
        <shortName evidence="1">MTA nucleosidase</shortName>
    </alternativeName>
    <alternativeName>
        <fullName evidence="1">S-adenosylhomocysteine nucleosidase</fullName>
        <shortName evidence="1">AdoHcy nucleosidase</shortName>
        <shortName evidence="1">SAH nucleosidase</shortName>
        <shortName evidence="1">SRH nucleosidase</shortName>
    </alternativeName>
</protein>
<keyword id="KW-0028">Amino-acid biosynthesis</keyword>
<keyword id="KW-0378">Hydrolase</keyword>
<keyword id="KW-0486">Methionine biosynthesis</keyword>
<gene>
    <name evidence="1" type="primary">mtnN</name>
    <name type="ordered locus">VV0635</name>
</gene>
<name>MTNN_VIBVY</name>
<sequence length="231" mass="24768">MKVGIIGAMQQEVAILKEAMTNAQTVNKAGCTFYSGQINGVEVVLLQSGIGKVAAAIGTTILLDEYQPDMVLNTGSAGGFDSSLNLGDVVISTEVRHHDADVTAFGYEMGQMAGQPAAFLADEKLMNLAEKALEQMDGQHAVRGLICTGDAFVCTAERQAFIRQHFPSVIAVEMEASAIAQTCHQFKVPFVVVRAISDVADKESPMSFEEFLPLAAKSSSEMVFKMLELLK</sequence>
<feature type="chain" id="PRO_0000359389" description="5'-methylthioadenosine/S-adenosylhomocysteine nucleosidase">
    <location>
        <begin position="1"/>
        <end position="231"/>
    </location>
</feature>
<feature type="active site" description="Proton acceptor" evidence="1">
    <location>
        <position position="12"/>
    </location>
</feature>
<feature type="active site" description="Proton donor" evidence="1">
    <location>
        <position position="198"/>
    </location>
</feature>
<feature type="binding site" evidence="1">
    <location>
        <position position="78"/>
    </location>
    <ligand>
        <name>substrate</name>
    </ligand>
</feature>
<feature type="binding site" evidence="1">
    <location>
        <position position="153"/>
    </location>
    <ligand>
        <name>substrate</name>
    </ligand>
</feature>
<feature type="binding site" evidence="1">
    <location>
        <begin position="174"/>
        <end position="175"/>
    </location>
    <ligand>
        <name>substrate</name>
    </ligand>
</feature>
<reference key="1">
    <citation type="journal article" date="2003" name="Genome Res.">
        <title>Comparative genome analysis of Vibrio vulnificus, a marine pathogen.</title>
        <authorList>
            <person name="Chen C.-Y."/>
            <person name="Wu K.-M."/>
            <person name="Chang Y.-C."/>
            <person name="Chang C.-H."/>
            <person name="Tsai H.-C."/>
            <person name="Liao T.-L."/>
            <person name="Liu Y.-M."/>
            <person name="Chen H.-J."/>
            <person name="Shen A.B.-T."/>
            <person name="Li J.-C."/>
            <person name="Su T.-L."/>
            <person name="Shao C.-P."/>
            <person name="Lee C.-T."/>
            <person name="Hor L.-I."/>
            <person name="Tsai S.-F."/>
        </authorList>
    </citation>
    <scope>NUCLEOTIDE SEQUENCE [LARGE SCALE GENOMIC DNA]</scope>
    <source>
        <strain>YJ016</strain>
    </source>
</reference>
<proteinExistence type="inferred from homology"/>